<organism evidence="6">
    <name type="scientific">Caenorhabditis elegans</name>
    <dbReference type="NCBI Taxonomy" id="6239"/>
    <lineage>
        <taxon>Eukaryota</taxon>
        <taxon>Metazoa</taxon>
        <taxon>Ecdysozoa</taxon>
        <taxon>Nematoda</taxon>
        <taxon>Chromadorea</taxon>
        <taxon>Rhabditida</taxon>
        <taxon>Rhabditina</taxon>
        <taxon>Rhabditomorpha</taxon>
        <taxon>Rhabditoidea</taxon>
        <taxon>Rhabditidae</taxon>
        <taxon>Peloderinae</taxon>
        <taxon>Caenorhabditis</taxon>
    </lineage>
</organism>
<accession>O76616</accession>
<evidence type="ECO:0000269" key="1">
    <source>
    </source>
</evidence>
<evidence type="ECO:0000269" key="2">
    <source>
    </source>
</evidence>
<evidence type="ECO:0000303" key="3">
    <source>
    </source>
</evidence>
<evidence type="ECO:0000305" key="4"/>
<evidence type="ECO:0000305" key="5">
    <source>
    </source>
</evidence>
<evidence type="ECO:0000312" key="6">
    <source>
        <dbReference type="Proteomes" id="UP000001940"/>
    </source>
</evidence>
<evidence type="ECO:0000312" key="7">
    <source>
        <dbReference type="WormBase" id="Y23H5A.3"/>
    </source>
</evidence>
<evidence type="ECO:0007829" key="8">
    <source>
        <dbReference type="PDB" id="7O6N"/>
    </source>
</evidence>
<evidence type="ECO:0007829" key="9">
    <source>
        <dbReference type="PDB" id="7OCX"/>
    </source>
</evidence>
<comment type="function">
    <text evidence="1 2 5">Component of the pid-1 and tost-1 variants of the PETISCO complexes, which have roles in the biogenesis of a class of 21 nucleotide PIWI-interacting RNAs (piRNAs) that possess a uracil residue at the 5'-end (also called 21U-RNAs) and embryogenesis, respectively (PubMed:31147388, PubMed:31216475). Within the pid-1 variant of the PETISCO complex may stabilize 21U-RNA precursor molecules (PubMed:31147388). Promotes the biogenesis of 21U-RNAs (PubMed:31216475). Required for chromosome segregation and cell division in early embryos (PubMed:31216475).</text>
</comment>
<comment type="subunit">
    <text evidence="1 2 5">Component of the pid-1 variant of the PETISCO complex (also called the pid-3, erh-2, tofu-6, and ife-3 small RNA complex) containing at least pid-1, tofu-6, ife-3, pid-3, and erh-2, which is required for the biogenesis of a class of 21 nucleotide PIWI-interacting RNAs (piRNAs) that possess a uracil residue at the 5'-end (also called 21U-RNAs) (PubMed:31147388, PubMed:31216475). Within the complex interacts with pid-1; the interaction is direct (PubMed:31147388, PubMed:31216475). Component of the tost-1 variant of the PETISCO complex (also called the pid-3, erh-2, tofu-6, and ife-3 small RNA complex) containing at least tost-1, tofu-6, ife-3, pid-3, and erh-2, which plays an essential role in embryogenesis (PubMed:31147388, PubMed:31216475). Within the complex interacts with tost-1 (PubMed:31216475). Within the pid-1 and tost-1 variants of the PETISCO complexes interacts with tofu-6 (via the RRM domain) and erh-2 (PubMed:31147388, PubMed:31216475). In contrast to the pid-1 variant of the PETISCO complex, the tost-1 variant of the PETISCO complex plays a minor role in the biogenesis of 21U-RNAs (PubMed:31147388).</text>
</comment>
<comment type="interaction">
    <interactant intactId="EBI-2415582">
        <id>O76616</id>
    </interactant>
    <interactant intactId="EBI-21447087">
        <id>Q20057</id>
        <label>erh-2</label>
    </interactant>
    <organismsDiffer>false</organismsDiffer>
    <experiments>5</experiments>
</comment>
<comment type="interaction">
    <interactant intactId="EBI-2415582">
        <id>O76616</id>
    </interactant>
    <interactant intactId="EBI-21447100">
        <id>Q19541</id>
        <label>pid-1</label>
    </interactant>
    <organismsDiffer>false</organismsDiffer>
    <experiments>4</experiments>
</comment>
<comment type="interaction">
    <interactant intactId="EBI-2415582">
        <id>O76616</id>
    </interactant>
    <interactant intactId="EBI-2001908">
        <id>Q09293</id>
        <label>tofu-6</label>
    </interactant>
    <organismsDiffer>false</organismsDiffer>
    <experiments>8</experiments>
</comment>
<comment type="subcellular location">
    <subcellularLocation>
        <location evidence="1">Cytoplasm</location>
    </subcellularLocation>
    <subcellularLocation>
        <location evidence="1">Cytoplasm</location>
        <location evidence="1">Perinuclear region</location>
    </subcellularLocation>
    <subcellularLocation>
        <location evidence="2">Nucleus</location>
    </subcellularLocation>
    <text evidence="1 2">Dispersedly distributes throughout the cytoplasm in early embryos (PubMed:31147388). During early embryogenesis, localizes to the nucleus at prophase of cell division, and remains in the cytosol at interphase in 2- and 4-cell embryos (PubMed:31216475). Localizes to puncta in the perinuclear region in the germline syncytium (PubMed:31147388).</text>
</comment>
<comment type="tissue specificity">
    <text evidence="1">Expressed in the germline (at protein level).</text>
</comment>
<comment type="developmental stage">
    <text evidence="1 2">Expressed from early embryogenesis (at protein level) (PubMed:31147388). During early embryogenesis, expressed during prophase and interphase in 2- and 4-cell embryos (PubMed:31216475).</text>
</comment>
<comment type="disruption phenotype">
    <text evidence="1 2">RNAi-mediated knockdown results in chromosome segregation and cell division defects in early embryos (PubMed:31216475). RNAi-mediated knockdown results in defective activity of the PIWI-interacting RNA (piRNA) silencing pathway (PubMed:31147388). RNAi-mediated knockdown disrupts the localization of tofu-6 and erh-2 to the perinuclear region of the germline (PubMed:31216475). Instead erh-2 accumulates in the nucleus (PubMed:31216475). RNAi-mediated knockdown results in decreased expression of tost-1 in the germline and in embryos (PubMed:31216475).</text>
</comment>
<protein>
    <recommendedName>
        <fullName evidence="4">Protein pid-3</fullName>
    </recommendedName>
    <alternativeName>
        <fullName evidence="3">piRNA biogenesis and chromosome segregation protein 1</fullName>
    </alternativeName>
    <alternativeName>
        <fullName evidence="7">piRNA-induced silencing defective protein 3</fullName>
    </alternativeName>
</protein>
<proteinExistence type="evidence at protein level"/>
<gene>
    <name evidence="7" type="primary">pid-3</name>
    <name evidence="3 7" type="synonym">pics-1</name>
    <name evidence="7" type="ORF">Y23H5A.3</name>
</gene>
<keyword id="KW-0002">3D-structure</keyword>
<keyword id="KW-0131">Cell cycle</keyword>
<keyword id="KW-0132">Cell division</keyword>
<keyword id="KW-0159">Chromosome partition</keyword>
<keyword id="KW-0963">Cytoplasm</keyword>
<keyword id="KW-0539">Nucleus</keyword>
<keyword id="KW-1185">Reference proteome</keyword>
<keyword id="KW-0943">RNA-mediated gene silencing</keyword>
<dbReference type="EMBL" id="BX284601">
    <property type="protein sequence ID" value="CCD70910.1"/>
    <property type="molecule type" value="Genomic_DNA"/>
</dbReference>
<dbReference type="PIR" id="F87729">
    <property type="entry name" value="F87729"/>
</dbReference>
<dbReference type="RefSeq" id="NP_491011.1">
    <property type="nucleotide sequence ID" value="NM_058610.6"/>
</dbReference>
<dbReference type="PDB" id="7D1L">
    <property type="method" value="X-ray"/>
    <property type="resolution" value="1.95 A"/>
    <property type="chains" value="C/D=201-282"/>
</dbReference>
<dbReference type="PDB" id="7D2Y">
    <property type="method" value="X-ray"/>
    <property type="resolution" value="2.68 A"/>
    <property type="chains" value="C/D=200-282"/>
</dbReference>
<dbReference type="PDB" id="7EJS">
    <property type="method" value="X-ray"/>
    <property type="resolution" value="2.39 A"/>
    <property type="chains" value="A/B=179-200"/>
</dbReference>
<dbReference type="PDB" id="7O6N">
    <property type="method" value="X-ray"/>
    <property type="resolution" value="2.17 A"/>
    <property type="chains" value="C/D=171-203"/>
</dbReference>
<dbReference type="PDB" id="7OCX">
    <property type="method" value="X-ray"/>
    <property type="resolution" value="1.70 A"/>
    <property type="chains" value="A/B=196-274"/>
</dbReference>
<dbReference type="PDB" id="7OCZ">
    <property type="method" value="X-ray"/>
    <property type="resolution" value="1.82 A"/>
    <property type="chains" value="A/B=196-274"/>
</dbReference>
<dbReference type="PDBsum" id="7D1L"/>
<dbReference type="PDBsum" id="7D2Y"/>
<dbReference type="PDBsum" id="7EJS"/>
<dbReference type="PDBsum" id="7O6N"/>
<dbReference type="PDBsum" id="7OCX"/>
<dbReference type="PDBsum" id="7OCZ"/>
<dbReference type="SMR" id="O76616"/>
<dbReference type="ComplexPortal" id="CPX-4306">
    <property type="entry name" value="PETISCO, pid-1 variant"/>
</dbReference>
<dbReference type="ComplexPortal" id="CPX-4307">
    <property type="entry name" value="PETISCO, tost-1 variant"/>
</dbReference>
<dbReference type="FunCoup" id="O76616">
    <property type="interactions" value="566"/>
</dbReference>
<dbReference type="IntAct" id="O76616">
    <property type="interactions" value="7"/>
</dbReference>
<dbReference type="STRING" id="6239.Y23H5A.3.1"/>
<dbReference type="PaxDb" id="6239-Y23H5A.3"/>
<dbReference type="PeptideAtlas" id="O76616"/>
<dbReference type="EnsemblMetazoa" id="Y23H5A.3.1">
    <property type="protein sequence ID" value="Y23H5A.3.1"/>
    <property type="gene ID" value="WBGene00021270"/>
</dbReference>
<dbReference type="GeneID" id="171819"/>
<dbReference type="KEGG" id="cel:CELE_Y23H5A.3"/>
<dbReference type="UCSC" id="Y23H5A.3">
    <property type="organism name" value="c. elegans"/>
</dbReference>
<dbReference type="AGR" id="WB:WBGene00021270"/>
<dbReference type="CTD" id="171819"/>
<dbReference type="WormBase" id="Y23H5A.3">
    <property type="protein sequence ID" value="CE18359"/>
    <property type="gene ID" value="WBGene00021270"/>
    <property type="gene designation" value="pid-3"/>
</dbReference>
<dbReference type="eggNOG" id="ENOG502ST2D">
    <property type="taxonomic scope" value="Eukaryota"/>
</dbReference>
<dbReference type="HOGENOM" id="CLU_062695_0_0_1"/>
<dbReference type="InParanoid" id="O76616"/>
<dbReference type="OMA" id="PWALICS"/>
<dbReference type="OrthoDB" id="5800150at2759"/>
<dbReference type="PRO" id="PR:O76616"/>
<dbReference type="Proteomes" id="UP000001940">
    <property type="component" value="Chromosome I"/>
</dbReference>
<dbReference type="Bgee" id="WBGene00021270">
    <property type="expression patterns" value="Expressed in germ line (C elegans) and 4 other cell types or tissues"/>
</dbReference>
<dbReference type="GO" id="GO:0005737">
    <property type="term" value="C:cytoplasm"/>
    <property type="evidence" value="ECO:0000314"/>
    <property type="project" value="UniProtKB"/>
</dbReference>
<dbReference type="GO" id="GO:0005634">
    <property type="term" value="C:nucleus"/>
    <property type="evidence" value="ECO:0000314"/>
    <property type="project" value="UniProtKB"/>
</dbReference>
<dbReference type="GO" id="GO:0048471">
    <property type="term" value="C:perinuclear region of cytoplasm"/>
    <property type="evidence" value="ECO:0000314"/>
    <property type="project" value="UniProtKB"/>
</dbReference>
<dbReference type="GO" id="GO:0034518">
    <property type="term" value="C:RNA cap binding complex"/>
    <property type="evidence" value="ECO:0000353"/>
    <property type="project" value="ComplexPortal"/>
</dbReference>
<dbReference type="GO" id="GO:0034585">
    <property type="term" value="P:21U-RNA metabolic process"/>
    <property type="evidence" value="ECO:0000303"/>
    <property type="project" value="ComplexPortal"/>
</dbReference>
<dbReference type="GO" id="GO:0051301">
    <property type="term" value="P:cell division"/>
    <property type="evidence" value="ECO:0007669"/>
    <property type="project" value="UniProtKB-KW"/>
</dbReference>
<dbReference type="GO" id="GO:0007059">
    <property type="term" value="P:chromosome segregation"/>
    <property type="evidence" value="ECO:0007669"/>
    <property type="project" value="UniProtKB-KW"/>
</dbReference>
<dbReference type="GO" id="GO:0009792">
    <property type="term" value="P:embryo development ending in birth or egg hatching"/>
    <property type="evidence" value="ECO:0000303"/>
    <property type="project" value="ComplexPortal"/>
</dbReference>
<dbReference type="GO" id="GO:0034587">
    <property type="term" value="P:piRNA processing"/>
    <property type="evidence" value="ECO:0000315"/>
    <property type="project" value="UniProtKB"/>
</dbReference>
<dbReference type="GO" id="GO:0051781">
    <property type="term" value="P:positive regulation of cell division"/>
    <property type="evidence" value="ECO:0000315"/>
    <property type="project" value="UniProtKB"/>
</dbReference>
<dbReference type="GO" id="GO:0051984">
    <property type="term" value="P:positive regulation of chromosome segregation"/>
    <property type="evidence" value="ECO:0000315"/>
    <property type="project" value="UniProtKB"/>
</dbReference>
<dbReference type="Gene3D" id="3.40.50.2300">
    <property type="match status" value="1"/>
</dbReference>
<reference evidence="6" key="1">
    <citation type="journal article" date="1998" name="Science">
        <title>Genome sequence of the nematode C. elegans: a platform for investigating biology.</title>
        <authorList>
            <consortium name="The C. elegans sequencing consortium"/>
        </authorList>
    </citation>
    <scope>NUCLEOTIDE SEQUENCE [LARGE SCALE GENOMIC DNA]</scope>
    <source>
        <strain evidence="6">Bristol N2</strain>
    </source>
</reference>
<reference evidence="4" key="2">
    <citation type="journal article" date="2019" name="Cell Rep.">
        <title>Functional Proteomics Identifies a PICS Complex Required for piRNA Maturation and Chromosome Segregation.</title>
        <authorList>
            <person name="Zeng C."/>
            <person name="Weng C."/>
            <person name="Wang X."/>
            <person name="Yan Y.H."/>
            <person name="Li W.J."/>
            <person name="Xu D."/>
            <person name="Hong M."/>
            <person name="Liao S."/>
            <person name="Dong M.Q."/>
            <person name="Feng X."/>
            <person name="Xu C."/>
            <person name="Guang S."/>
        </authorList>
    </citation>
    <scope>FUNCTION</scope>
    <scope>IDENTIFICATION IN THE PETISCO COMPLEXES</scope>
    <scope>INTERACTION WITH PID-1; TOFU-6; TOST-1 AND ERH-2</scope>
    <scope>SUBCELLULAR LOCATION</scope>
    <scope>DEVELOPMENTAL STAGE</scope>
    <scope>DISRUPTION PHENOTYPE</scope>
</reference>
<reference evidence="4" key="3">
    <citation type="journal article" date="2019" name="Genes Dev.">
        <title>PETISCO is a novel protein complex required for 21U RNA biogenesis and embryonic viability.</title>
        <authorList>
            <person name="Cordeiro Rodrigues R.J."/>
            <person name="de Jesus Domingues A.M."/>
            <person name="Hellmann S."/>
            <person name="Dietz S."/>
            <person name="de Albuquerque B.F.M."/>
            <person name="Renz C."/>
            <person name="Ulrich H.D."/>
            <person name="Sarkies P."/>
            <person name="Butter F."/>
            <person name="Ketting R.F."/>
        </authorList>
    </citation>
    <scope>FUNCTION</scope>
    <scope>IDENTIFICATION IN THE PETISCO COMPLEXES</scope>
    <scope>INTERACTION WITH PID-1; TOFU-6 AND ERH-2</scope>
    <scope>SUBCELLULAR LOCATION</scope>
    <scope>TISSUE SPECIFICITY</scope>
    <scope>DEVELOPMENTAL STAGE</scope>
    <scope>DISRUPTION PHENOTYPE</scope>
</reference>
<feature type="chain" id="PRO_0000452466" description="Protein pid-3">
    <location>
        <begin position="1"/>
        <end position="307"/>
    </location>
</feature>
<feature type="helix" evidence="8">
    <location>
        <begin position="179"/>
        <end position="190"/>
    </location>
</feature>
<feature type="helix" evidence="9">
    <location>
        <begin position="201"/>
        <end position="203"/>
    </location>
</feature>
<feature type="strand" evidence="9">
    <location>
        <begin position="204"/>
        <end position="208"/>
    </location>
</feature>
<feature type="helix" evidence="9">
    <location>
        <begin position="216"/>
        <end position="222"/>
    </location>
</feature>
<feature type="turn" evidence="9">
    <location>
        <begin position="223"/>
        <end position="225"/>
    </location>
</feature>
<feature type="strand" evidence="9">
    <location>
        <begin position="228"/>
        <end position="235"/>
    </location>
</feature>
<feature type="strand" evidence="9">
    <location>
        <begin position="238"/>
        <end position="245"/>
    </location>
</feature>
<feature type="helix" evidence="9">
    <location>
        <begin position="246"/>
        <end position="256"/>
    </location>
</feature>
<feature type="strand" evidence="9">
    <location>
        <begin position="260"/>
        <end position="262"/>
    </location>
</feature>
<feature type="strand" evidence="9">
    <location>
        <begin position="268"/>
        <end position="272"/>
    </location>
</feature>
<name>PID3_CAEEL</name>
<sequence>MVAHQKADFKSKWAMVVTVNNLNDKKRADLREFSEWFIETLRLEGAFIGHYFNYEAAPVTIVETLPGNFDSCTNAYQKIHKEHPQVVLVVHILPQSQSNEYEWMKVLASRYGFVRQGLLYDNCANRFQNVETDQNSVFRNMCQWIYRSGTAIVRNEGNACGILHGKDPKPTFDKVLFNSEDIKDSVFKVLHAEEEPRGADQENMLKISGYPGMLNTFGIAQLLTPYRVNGITITGAQSAVVALENKFQVYQAVQDFNGKKLDRNHKLQVSSLVVSSPAVPLEWPSLKKSKKLVEQVGKPIRLSKVSS</sequence>